<keyword id="KW-0066">ATP synthesis</keyword>
<keyword id="KW-0997">Cell inner membrane</keyword>
<keyword id="KW-1003">Cell membrane</keyword>
<keyword id="KW-0139">CF(1)</keyword>
<keyword id="KW-0375">Hydrogen ion transport</keyword>
<keyword id="KW-0406">Ion transport</keyword>
<keyword id="KW-0472">Membrane</keyword>
<keyword id="KW-0813">Transport</keyword>
<feature type="chain" id="PRO_1000053291" description="ATP synthase gamma chain">
    <location>
        <begin position="1"/>
        <end position="286"/>
    </location>
</feature>
<sequence>MAGAKEIRSKIASIKSTQKITNAMEKVAVSKMRKAQMRMAAGRPYAERIRQVIGHLANANPEYRHPFMVEREVKRVGYIVVSSDRGLCGGLNINLFKSLVKDMSGYREQGAEIDLCVIGSKGASFFRSFGGNVVAAISHLGEEPSINDLIGSVKVMLDAYLEGRIDRLFVVSNKFVNTMTQKPTVEQLIPLVADDDQELKHHWDYLYEPDAKSLLDGLLVRYVESQVYQAVVENNACEQAARMIAMKNATDNAGELISDLQLIYNKARQAAITQEISEIVGGAAAV</sequence>
<comment type="function">
    <text evidence="1">Produces ATP from ADP in the presence of a proton gradient across the membrane. The gamma chain is believed to be important in regulating ATPase activity and the flow of protons through the CF(0) complex.</text>
</comment>
<comment type="subunit">
    <text evidence="1">F-type ATPases have 2 components, CF(1) - the catalytic core - and CF(0) - the membrane proton channel. CF(1) has five subunits: alpha(3), beta(3), gamma(1), delta(1), epsilon(1). CF(0) has three main subunits: a, b and c.</text>
</comment>
<comment type="subcellular location">
    <subcellularLocation>
        <location evidence="1">Cell inner membrane</location>
        <topology evidence="1">Peripheral membrane protein</topology>
    </subcellularLocation>
</comment>
<comment type="similarity">
    <text evidence="1">Belongs to the ATPase gamma chain family.</text>
</comment>
<evidence type="ECO:0000255" key="1">
    <source>
        <dbReference type="HAMAP-Rule" id="MF_00815"/>
    </source>
</evidence>
<name>ATPG_PSEAB</name>
<protein>
    <recommendedName>
        <fullName evidence="1">ATP synthase gamma chain</fullName>
    </recommendedName>
    <alternativeName>
        <fullName evidence="1">ATP synthase F1 sector gamma subunit</fullName>
    </alternativeName>
    <alternativeName>
        <fullName evidence="1">F-ATPase gamma subunit</fullName>
    </alternativeName>
</protein>
<reference key="1">
    <citation type="journal article" date="2006" name="Genome Biol.">
        <title>Genomic analysis reveals that Pseudomonas aeruginosa virulence is combinatorial.</title>
        <authorList>
            <person name="Lee D.G."/>
            <person name="Urbach J.M."/>
            <person name="Wu G."/>
            <person name="Liberati N.T."/>
            <person name="Feinbaum R.L."/>
            <person name="Miyata S."/>
            <person name="Diggins L.T."/>
            <person name="He J."/>
            <person name="Saucier M."/>
            <person name="Deziel E."/>
            <person name="Friedman L."/>
            <person name="Li L."/>
            <person name="Grills G."/>
            <person name="Montgomery K."/>
            <person name="Kucherlapati R."/>
            <person name="Rahme L.G."/>
            <person name="Ausubel F.M."/>
        </authorList>
    </citation>
    <scope>NUCLEOTIDE SEQUENCE [LARGE SCALE GENOMIC DNA]</scope>
    <source>
        <strain>UCBPP-PA14</strain>
    </source>
</reference>
<accession>Q02DF3</accession>
<organism>
    <name type="scientific">Pseudomonas aeruginosa (strain UCBPP-PA14)</name>
    <dbReference type="NCBI Taxonomy" id="208963"/>
    <lineage>
        <taxon>Bacteria</taxon>
        <taxon>Pseudomonadati</taxon>
        <taxon>Pseudomonadota</taxon>
        <taxon>Gammaproteobacteria</taxon>
        <taxon>Pseudomonadales</taxon>
        <taxon>Pseudomonadaceae</taxon>
        <taxon>Pseudomonas</taxon>
    </lineage>
</organism>
<proteinExistence type="inferred from homology"/>
<gene>
    <name evidence="1" type="primary">atpG</name>
    <name type="ordered locus">PA14_73250</name>
</gene>
<dbReference type="EMBL" id="CP000438">
    <property type="protein sequence ID" value="ABJ14942.1"/>
    <property type="molecule type" value="Genomic_DNA"/>
</dbReference>
<dbReference type="RefSeq" id="WP_003097132.1">
    <property type="nucleotide sequence ID" value="NZ_CP034244.1"/>
</dbReference>
<dbReference type="SMR" id="Q02DF3"/>
<dbReference type="GeneID" id="77224108"/>
<dbReference type="KEGG" id="pau:PA14_73250"/>
<dbReference type="PseudoCAP" id="PA14_73250"/>
<dbReference type="HOGENOM" id="CLU_050669_0_1_6"/>
<dbReference type="BioCyc" id="PAER208963:G1G74-6162-MONOMER"/>
<dbReference type="Proteomes" id="UP000000653">
    <property type="component" value="Chromosome"/>
</dbReference>
<dbReference type="GO" id="GO:0005886">
    <property type="term" value="C:plasma membrane"/>
    <property type="evidence" value="ECO:0007669"/>
    <property type="project" value="UniProtKB-SubCell"/>
</dbReference>
<dbReference type="GO" id="GO:0045259">
    <property type="term" value="C:proton-transporting ATP synthase complex"/>
    <property type="evidence" value="ECO:0007669"/>
    <property type="project" value="UniProtKB-KW"/>
</dbReference>
<dbReference type="GO" id="GO:0005524">
    <property type="term" value="F:ATP binding"/>
    <property type="evidence" value="ECO:0007669"/>
    <property type="project" value="UniProtKB-UniRule"/>
</dbReference>
<dbReference type="GO" id="GO:0046933">
    <property type="term" value="F:proton-transporting ATP synthase activity, rotational mechanism"/>
    <property type="evidence" value="ECO:0007669"/>
    <property type="project" value="UniProtKB-UniRule"/>
</dbReference>
<dbReference type="GO" id="GO:0042777">
    <property type="term" value="P:proton motive force-driven plasma membrane ATP synthesis"/>
    <property type="evidence" value="ECO:0007669"/>
    <property type="project" value="UniProtKB-UniRule"/>
</dbReference>
<dbReference type="CDD" id="cd12151">
    <property type="entry name" value="F1-ATPase_gamma"/>
    <property type="match status" value="1"/>
</dbReference>
<dbReference type="FunFam" id="1.10.287.80:FF:000005">
    <property type="entry name" value="ATP synthase gamma chain"/>
    <property type="match status" value="1"/>
</dbReference>
<dbReference type="FunFam" id="3.40.1380.10:FF:000001">
    <property type="entry name" value="ATP synthase gamma chain"/>
    <property type="match status" value="1"/>
</dbReference>
<dbReference type="Gene3D" id="3.40.1380.10">
    <property type="match status" value="1"/>
</dbReference>
<dbReference type="Gene3D" id="1.10.287.80">
    <property type="entry name" value="ATP synthase, gamma subunit, helix hairpin domain"/>
    <property type="match status" value="1"/>
</dbReference>
<dbReference type="HAMAP" id="MF_00815">
    <property type="entry name" value="ATP_synth_gamma_bact"/>
    <property type="match status" value="1"/>
</dbReference>
<dbReference type="InterPro" id="IPR035968">
    <property type="entry name" value="ATP_synth_F1_ATPase_gsu"/>
</dbReference>
<dbReference type="InterPro" id="IPR000131">
    <property type="entry name" value="ATP_synth_F1_gsu"/>
</dbReference>
<dbReference type="InterPro" id="IPR023632">
    <property type="entry name" value="ATP_synth_F1_gsu_CS"/>
</dbReference>
<dbReference type="NCBIfam" id="TIGR01146">
    <property type="entry name" value="ATPsyn_F1gamma"/>
    <property type="match status" value="1"/>
</dbReference>
<dbReference type="NCBIfam" id="NF004144">
    <property type="entry name" value="PRK05621.1-1"/>
    <property type="match status" value="1"/>
</dbReference>
<dbReference type="PANTHER" id="PTHR11693">
    <property type="entry name" value="ATP SYNTHASE GAMMA CHAIN"/>
    <property type="match status" value="1"/>
</dbReference>
<dbReference type="PANTHER" id="PTHR11693:SF22">
    <property type="entry name" value="ATP SYNTHASE SUBUNIT GAMMA, MITOCHONDRIAL"/>
    <property type="match status" value="1"/>
</dbReference>
<dbReference type="Pfam" id="PF00231">
    <property type="entry name" value="ATP-synt"/>
    <property type="match status" value="1"/>
</dbReference>
<dbReference type="PRINTS" id="PR00126">
    <property type="entry name" value="ATPASEGAMMA"/>
</dbReference>
<dbReference type="SUPFAM" id="SSF52943">
    <property type="entry name" value="ATP synthase (F1-ATPase), gamma subunit"/>
    <property type="match status" value="1"/>
</dbReference>
<dbReference type="PROSITE" id="PS00153">
    <property type="entry name" value="ATPASE_GAMMA"/>
    <property type="match status" value="1"/>
</dbReference>